<gene>
    <name evidence="1" type="primary">mnmA</name>
    <name type="ordered locus">SPCG_0121</name>
</gene>
<name>MNMA_STRPS</name>
<reference key="1">
    <citation type="journal article" date="2009" name="BMC Genomics">
        <title>Genome evolution driven by host adaptations results in a more virulent and antimicrobial-resistant Streptococcus pneumoniae serotype 14.</title>
        <authorList>
            <person name="Ding F."/>
            <person name="Tang P."/>
            <person name="Hsu M.-H."/>
            <person name="Cui P."/>
            <person name="Hu S."/>
            <person name="Yu J."/>
            <person name="Chiu C.-H."/>
        </authorList>
    </citation>
    <scope>NUCLEOTIDE SEQUENCE [LARGE SCALE GENOMIC DNA]</scope>
    <source>
        <strain>CGSP14</strain>
    </source>
</reference>
<protein>
    <recommendedName>
        <fullName evidence="1">tRNA-specific 2-thiouridylase MnmA</fullName>
        <ecNumber evidence="1">2.8.1.13</ecNumber>
    </recommendedName>
</protein>
<evidence type="ECO:0000255" key="1">
    <source>
        <dbReference type="HAMAP-Rule" id="MF_00144"/>
    </source>
</evidence>
<evidence type="ECO:0000305" key="2"/>
<keyword id="KW-0067">ATP-binding</keyword>
<keyword id="KW-0963">Cytoplasm</keyword>
<keyword id="KW-1015">Disulfide bond</keyword>
<keyword id="KW-0547">Nucleotide-binding</keyword>
<keyword id="KW-0694">RNA-binding</keyword>
<keyword id="KW-0808">Transferase</keyword>
<keyword id="KW-0819">tRNA processing</keyword>
<keyword id="KW-0820">tRNA-binding</keyword>
<comment type="function">
    <text evidence="1">Catalyzes the 2-thiolation of uridine at the wobble position (U34) of tRNA, leading to the formation of s(2)U34.</text>
</comment>
<comment type="catalytic activity">
    <reaction evidence="1">
        <text>S-sulfanyl-L-cysteinyl-[protein] + uridine(34) in tRNA + AH2 + ATP = 2-thiouridine(34) in tRNA + L-cysteinyl-[protein] + A + AMP + diphosphate + H(+)</text>
        <dbReference type="Rhea" id="RHEA:47032"/>
        <dbReference type="Rhea" id="RHEA-COMP:10131"/>
        <dbReference type="Rhea" id="RHEA-COMP:11726"/>
        <dbReference type="Rhea" id="RHEA-COMP:11727"/>
        <dbReference type="Rhea" id="RHEA-COMP:11728"/>
        <dbReference type="ChEBI" id="CHEBI:13193"/>
        <dbReference type="ChEBI" id="CHEBI:15378"/>
        <dbReference type="ChEBI" id="CHEBI:17499"/>
        <dbReference type="ChEBI" id="CHEBI:29950"/>
        <dbReference type="ChEBI" id="CHEBI:30616"/>
        <dbReference type="ChEBI" id="CHEBI:33019"/>
        <dbReference type="ChEBI" id="CHEBI:61963"/>
        <dbReference type="ChEBI" id="CHEBI:65315"/>
        <dbReference type="ChEBI" id="CHEBI:87170"/>
        <dbReference type="ChEBI" id="CHEBI:456215"/>
        <dbReference type="EC" id="2.8.1.13"/>
    </reaction>
</comment>
<comment type="subcellular location">
    <subcellularLocation>
        <location evidence="1">Cytoplasm</location>
    </subcellularLocation>
</comment>
<comment type="similarity">
    <text evidence="1">Belongs to the MnmA/TRMU family.</text>
</comment>
<comment type="sequence caution" evidence="2">
    <conflict type="erroneous initiation">
        <sequence resource="EMBL-CDS" id="ACB89373"/>
    </conflict>
</comment>
<proteinExistence type="inferred from homology"/>
<organism>
    <name type="scientific">Streptococcus pneumoniae (strain CGSP14)</name>
    <dbReference type="NCBI Taxonomy" id="516950"/>
    <lineage>
        <taxon>Bacteria</taxon>
        <taxon>Bacillati</taxon>
        <taxon>Bacillota</taxon>
        <taxon>Bacilli</taxon>
        <taxon>Lactobacillales</taxon>
        <taxon>Streptococcaceae</taxon>
        <taxon>Streptococcus</taxon>
    </lineage>
</organism>
<feature type="chain" id="PRO_0000349809" description="tRNA-specific 2-thiouridylase MnmA">
    <location>
        <begin position="1"/>
        <end position="373"/>
    </location>
</feature>
<feature type="region of interest" description="Interaction with target base in tRNA" evidence="1">
    <location>
        <begin position="98"/>
        <end position="100"/>
    </location>
</feature>
<feature type="region of interest" description="Interaction with tRNA" evidence="1">
    <location>
        <begin position="150"/>
        <end position="152"/>
    </location>
</feature>
<feature type="region of interest" description="Interaction with tRNA" evidence="1">
    <location>
        <begin position="312"/>
        <end position="313"/>
    </location>
</feature>
<feature type="active site" description="Nucleophile" evidence="1">
    <location>
        <position position="103"/>
    </location>
</feature>
<feature type="active site" description="Cysteine persulfide intermediate" evidence="1">
    <location>
        <position position="200"/>
    </location>
</feature>
<feature type="binding site" evidence="1">
    <location>
        <begin position="12"/>
        <end position="19"/>
    </location>
    <ligand>
        <name>ATP</name>
        <dbReference type="ChEBI" id="CHEBI:30616"/>
    </ligand>
</feature>
<feature type="binding site" evidence="1">
    <location>
        <position position="38"/>
    </location>
    <ligand>
        <name>ATP</name>
        <dbReference type="ChEBI" id="CHEBI:30616"/>
    </ligand>
</feature>
<feature type="binding site" evidence="1">
    <location>
        <position position="127"/>
    </location>
    <ligand>
        <name>ATP</name>
        <dbReference type="ChEBI" id="CHEBI:30616"/>
    </ligand>
</feature>
<feature type="site" description="Interaction with tRNA" evidence="1">
    <location>
        <position position="128"/>
    </location>
</feature>
<feature type="site" description="Interaction with tRNA" evidence="1">
    <location>
        <position position="344"/>
    </location>
</feature>
<feature type="disulfide bond" description="Alternate" evidence="1">
    <location>
        <begin position="103"/>
        <end position="200"/>
    </location>
</feature>
<accession>B2IRK2</accession>
<dbReference type="EC" id="2.8.1.13" evidence="1"/>
<dbReference type="EMBL" id="CP001033">
    <property type="protein sequence ID" value="ACB89373.1"/>
    <property type="status" value="ALT_INIT"/>
    <property type="molecule type" value="Genomic_DNA"/>
</dbReference>
<dbReference type="RefSeq" id="WP_001282991.1">
    <property type="nucleotide sequence ID" value="NC_010582.1"/>
</dbReference>
<dbReference type="SMR" id="B2IRK2"/>
<dbReference type="KEGG" id="spw:SPCG_0121"/>
<dbReference type="HOGENOM" id="CLU_035188_1_0_9"/>
<dbReference type="GO" id="GO:0005737">
    <property type="term" value="C:cytoplasm"/>
    <property type="evidence" value="ECO:0007669"/>
    <property type="project" value="UniProtKB-SubCell"/>
</dbReference>
<dbReference type="GO" id="GO:0005524">
    <property type="term" value="F:ATP binding"/>
    <property type="evidence" value="ECO:0007669"/>
    <property type="project" value="UniProtKB-KW"/>
</dbReference>
<dbReference type="GO" id="GO:0000049">
    <property type="term" value="F:tRNA binding"/>
    <property type="evidence" value="ECO:0007669"/>
    <property type="project" value="UniProtKB-KW"/>
</dbReference>
<dbReference type="GO" id="GO:0103016">
    <property type="term" value="F:tRNA-uridine 2-sulfurtransferase activity"/>
    <property type="evidence" value="ECO:0007669"/>
    <property type="project" value="UniProtKB-EC"/>
</dbReference>
<dbReference type="GO" id="GO:0002143">
    <property type="term" value="P:tRNA wobble position uridine thiolation"/>
    <property type="evidence" value="ECO:0007669"/>
    <property type="project" value="TreeGrafter"/>
</dbReference>
<dbReference type="CDD" id="cd01998">
    <property type="entry name" value="MnmA_TRMU-like"/>
    <property type="match status" value="1"/>
</dbReference>
<dbReference type="FunFam" id="2.30.30.280:FF:000001">
    <property type="entry name" value="tRNA-specific 2-thiouridylase MnmA"/>
    <property type="match status" value="1"/>
</dbReference>
<dbReference type="FunFam" id="2.40.30.10:FF:000023">
    <property type="entry name" value="tRNA-specific 2-thiouridylase MnmA"/>
    <property type="match status" value="1"/>
</dbReference>
<dbReference type="FunFam" id="3.40.50.620:FF:000004">
    <property type="entry name" value="tRNA-specific 2-thiouridylase MnmA"/>
    <property type="match status" value="1"/>
</dbReference>
<dbReference type="Gene3D" id="2.30.30.280">
    <property type="entry name" value="Adenine nucleotide alpha hydrolases-like domains"/>
    <property type="match status" value="1"/>
</dbReference>
<dbReference type="Gene3D" id="3.40.50.620">
    <property type="entry name" value="HUPs"/>
    <property type="match status" value="1"/>
</dbReference>
<dbReference type="Gene3D" id="2.40.30.10">
    <property type="entry name" value="Translation factors"/>
    <property type="match status" value="1"/>
</dbReference>
<dbReference type="HAMAP" id="MF_00144">
    <property type="entry name" value="tRNA_thiouridyl_MnmA"/>
    <property type="match status" value="1"/>
</dbReference>
<dbReference type="InterPro" id="IPR004506">
    <property type="entry name" value="MnmA-like"/>
</dbReference>
<dbReference type="InterPro" id="IPR046885">
    <property type="entry name" value="MnmA-like_C"/>
</dbReference>
<dbReference type="InterPro" id="IPR046884">
    <property type="entry name" value="MnmA-like_central"/>
</dbReference>
<dbReference type="InterPro" id="IPR023382">
    <property type="entry name" value="MnmA-like_central_sf"/>
</dbReference>
<dbReference type="InterPro" id="IPR014729">
    <property type="entry name" value="Rossmann-like_a/b/a_fold"/>
</dbReference>
<dbReference type="NCBIfam" id="NF001138">
    <property type="entry name" value="PRK00143.1"/>
    <property type="match status" value="1"/>
</dbReference>
<dbReference type="NCBIfam" id="TIGR00420">
    <property type="entry name" value="trmU"/>
    <property type="match status" value="1"/>
</dbReference>
<dbReference type="PANTHER" id="PTHR11933:SF5">
    <property type="entry name" value="MITOCHONDRIAL TRNA-SPECIFIC 2-THIOURIDYLASE 1"/>
    <property type="match status" value="1"/>
</dbReference>
<dbReference type="PANTHER" id="PTHR11933">
    <property type="entry name" value="TRNA 5-METHYLAMINOMETHYL-2-THIOURIDYLATE -METHYLTRANSFERASE"/>
    <property type="match status" value="1"/>
</dbReference>
<dbReference type="Pfam" id="PF03054">
    <property type="entry name" value="tRNA_Me_trans"/>
    <property type="match status" value="1"/>
</dbReference>
<dbReference type="Pfam" id="PF20258">
    <property type="entry name" value="tRNA_Me_trans_C"/>
    <property type="match status" value="1"/>
</dbReference>
<dbReference type="Pfam" id="PF20259">
    <property type="entry name" value="tRNA_Me_trans_M"/>
    <property type="match status" value="1"/>
</dbReference>
<dbReference type="SUPFAM" id="SSF52402">
    <property type="entry name" value="Adenine nucleotide alpha hydrolases-like"/>
    <property type="match status" value="1"/>
</dbReference>
<sequence>MSDNSKTRVVVGMSGGVDSSVTALLLKEQGYDVIGIFMKNWDDTDENGVCTATEDYKDVVAVADQIGIPYYSVNFEKEYWDRVFEYFLAEYRAGRTPNPDVMCNKEIKFKAFLDYAMTLGADYVATGHYARVVRDEDGTVHMLRGVDNGKDQTYFLSQLSQEQLQKTMFPLGHLEKPEVRKLAEEAGLSTAKKKDSTGICFIGEKNFKNFLSNYLPAQPGRMMTVDGRDMGEHAGLMYYTIGQRGGLGIGGQHGGDNAPWFVVGKDLSKNILYVGQGFYHDSLMSTSLEASQVHFTREMPEEFTLECTAKFRYRQPDSKVTVHVKGDKAEVIFTEPQRAITPGQAVVFYDGEECLGGGLIDNAYRDGQVCQYI</sequence>